<name>CAPSD_HPBDC</name>
<accession>P0C6K1</accession>
<evidence type="ECO:0000250" key="1"/>
<evidence type="ECO:0000250" key="2">
    <source>
        <dbReference type="UniProtKB" id="P03148"/>
    </source>
</evidence>
<evidence type="ECO:0000255" key="3"/>
<evidence type="ECO:0000256" key="4">
    <source>
        <dbReference type="SAM" id="MobiDB-lite"/>
    </source>
</evidence>
<evidence type="ECO:0000305" key="5"/>
<organism>
    <name type="scientific">Duck hepatitis B virus (strain China)</name>
    <name type="common">DHBV</name>
    <dbReference type="NCBI Taxonomy" id="31510"/>
    <lineage>
        <taxon>Viruses</taxon>
        <taxon>Riboviria</taxon>
        <taxon>Pararnavirae</taxon>
        <taxon>Artverviricota</taxon>
        <taxon>Revtraviricetes</taxon>
        <taxon>Blubervirales</taxon>
        <taxon>Hepadnaviridae</taxon>
        <taxon>Avihepadnavirus</taxon>
        <taxon>Duck hepatitis B virus</taxon>
    </lineage>
</organism>
<reference key="1">
    <citation type="journal article" date="1990" name="Nucleic Acids Res.">
        <title>Complete nucleotide sequence of a Chinese duck hepatitis B virus.</title>
        <authorList>
            <person name="Tong S."/>
            <person name="Mattes F."/>
            <person name="Teubner K."/>
            <person name="Blum H.E."/>
        </authorList>
    </citation>
    <scope>NUCLEOTIDE SEQUENCE [GENOMIC DNA]</scope>
</reference>
<dbReference type="EMBL" id="M21953">
    <property type="status" value="NOT_ANNOTATED_CDS"/>
    <property type="molecule type" value="Genomic_DNA"/>
</dbReference>
<dbReference type="SMR" id="P0C6K1"/>
<dbReference type="Proteomes" id="UP000008119">
    <property type="component" value="Genome"/>
</dbReference>
<dbReference type="GO" id="GO:0043657">
    <property type="term" value="C:host cell"/>
    <property type="evidence" value="ECO:0007669"/>
    <property type="project" value="GOC"/>
</dbReference>
<dbReference type="GO" id="GO:0030430">
    <property type="term" value="C:host cell cytoplasm"/>
    <property type="evidence" value="ECO:0007669"/>
    <property type="project" value="UniProtKB-SubCell"/>
</dbReference>
<dbReference type="GO" id="GO:0039619">
    <property type="term" value="C:T=4 icosahedral viral capsid"/>
    <property type="evidence" value="ECO:0007669"/>
    <property type="project" value="UniProtKB-KW"/>
</dbReference>
<dbReference type="GO" id="GO:0003677">
    <property type="term" value="F:DNA binding"/>
    <property type="evidence" value="ECO:0007669"/>
    <property type="project" value="UniProtKB-KW"/>
</dbReference>
<dbReference type="GO" id="GO:0003723">
    <property type="term" value="F:RNA binding"/>
    <property type="evidence" value="ECO:0007669"/>
    <property type="project" value="UniProtKB-KW"/>
</dbReference>
<dbReference type="GO" id="GO:0005198">
    <property type="term" value="F:structural molecule activity"/>
    <property type="evidence" value="ECO:0007669"/>
    <property type="project" value="InterPro"/>
</dbReference>
<dbReference type="GO" id="GO:0075521">
    <property type="term" value="P:microtubule-dependent intracellular transport of viral material towards nucleus"/>
    <property type="evidence" value="ECO:0007669"/>
    <property type="project" value="UniProtKB-KW"/>
</dbReference>
<dbReference type="GO" id="GO:0046718">
    <property type="term" value="P:symbiont entry into host cell"/>
    <property type="evidence" value="ECO:0007669"/>
    <property type="project" value="UniProtKB-KW"/>
</dbReference>
<dbReference type="GO" id="GO:0075732">
    <property type="term" value="P:viral penetration into host nucleus"/>
    <property type="evidence" value="ECO:0007669"/>
    <property type="project" value="UniProtKB-KW"/>
</dbReference>
<dbReference type="Gene3D" id="1.10.4090.10">
    <property type="entry name" value="Viral capsid, core domain supefamily, Hepatitis B virus"/>
    <property type="match status" value="2"/>
</dbReference>
<dbReference type="InterPro" id="IPR002006">
    <property type="entry name" value="Hepatitis_core"/>
</dbReference>
<dbReference type="InterPro" id="IPR036459">
    <property type="entry name" value="Viral_capsid_core_dom_sf_HBV"/>
</dbReference>
<dbReference type="Pfam" id="PF00906">
    <property type="entry name" value="Hepatitis_core"/>
    <property type="match status" value="1"/>
</dbReference>
<dbReference type="SUPFAM" id="SSF47852">
    <property type="entry name" value="Hepatitis B viral capsid (hbcag)"/>
    <property type="match status" value="1"/>
</dbReference>
<proteinExistence type="inferred from homology"/>
<feature type="chain" id="PRO_0000324347" description="Capsid protein">
    <location>
        <begin position="1"/>
        <end position="262"/>
    </location>
</feature>
<feature type="region of interest" description="Disordered" evidence="4">
    <location>
        <begin position="183"/>
        <end position="262"/>
    </location>
</feature>
<feature type="region of interest" description="RNA binding" evidence="1">
    <location>
        <begin position="254"/>
        <end position="260"/>
    </location>
</feature>
<feature type="short sequence motif" description="Bipartite nuclear localization signal" evidence="3">
    <location>
        <begin position="215"/>
        <end position="233"/>
    </location>
</feature>
<feature type="compositionally biased region" description="Basic residues" evidence="4">
    <location>
        <begin position="215"/>
        <end position="234"/>
    </location>
</feature>
<feature type="compositionally biased region" description="Basic residues" evidence="4">
    <location>
        <begin position="252"/>
        <end position="262"/>
    </location>
</feature>
<feature type="modified residue" description="Phosphoserine; by host" evidence="1">
    <location>
        <position position="232"/>
    </location>
</feature>
<feature type="modified residue" description="Phosphoserine; by host" evidence="1">
    <location>
        <position position="239"/>
    </location>
</feature>
<feature type="modified residue" description="Phosphoserine; by host" evidence="1">
    <location>
        <position position="245"/>
    </location>
</feature>
<gene>
    <name type="primary">C</name>
</gene>
<comment type="function">
    <text evidence="1">Self assembles to form an icosahedral capsid. Most capsid appear to be large particles with an icosahedral symmetry of T=4 and consist of 240 copies of capsid protein, though a fraction forms smaller T=3 particles consisting of 180 capsid proteins. Entering capsid are transported along microtubules to the nucleus. Phosphorylation of the capsid is thought to induce exposure of nuclear localization signal in the C-terminal portion of the capsid protein that allows binding to the nuclear pore complex via the importin (karyopherin-) alpha and beta. Capsids are imported in intact form through the nuclear pore into the nuclear basket, where it probably binds NUP153. Only capsids that contain the mature viral genome can release the viral DNA and capsid protein into the nucleoplasm. Immature capsids get stucked in the basket. Capsids encapsulate the pre-genomic RNA and the P protein. Pre-genomic RNA is reverse transcribed into DNA while the capsid is still in the cytoplasm. The capsid can then either be directed to the nucleus, providing more genome for transcription, or bud through the endoplasmic reticulum to provide new virions (By similarity).</text>
</comment>
<comment type="subunit">
    <text evidence="1">Homodimerizes, then multimerizes.</text>
</comment>
<comment type="subcellular location">
    <molecule>Capsid protein</molecule>
    <subcellularLocation>
        <location evidence="2">Virion</location>
    </subcellularLocation>
    <subcellularLocation>
        <location evidence="2">Host cytoplasm</location>
    </subcellularLocation>
</comment>
<comment type="alternative products">
    <event type="alternative initiation"/>
    <isoform>
        <id>P0C6K1-1</id>
        <name>Capsid protein</name>
        <sequence type="displayed"/>
    </isoform>
    <isoform>
        <id>P30027-1</id>
        <name>External core antigen</name>
        <sequence type="external"/>
    </isoform>
</comment>
<comment type="similarity">
    <text evidence="5">Belongs to the avihepadnavirus core antigen family.</text>
</comment>
<organismHost>
    <name type="scientific">Anas</name>
    <name type="common">ducks</name>
    <dbReference type="NCBI Taxonomy" id="8835"/>
</organismHost>
<keyword id="KW-0024">Alternative initiation</keyword>
<keyword id="KW-0167">Capsid protein</keyword>
<keyword id="KW-1176">Cytoplasmic inwards viral transport</keyword>
<keyword id="KW-0238">DNA-binding</keyword>
<keyword id="KW-1035">Host cytoplasm</keyword>
<keyword id="KW-0945">Host-virus interaction</keyword>
<keyword id="KW-1177">Microtubular inwards viral transport</keyword>
<keyword id="KW-0597">Phosphoprotein</keyword>
<keyword id="KW-0694">RNA-binding</keyword>
<keyword id="KW-1144">T=4 icosahedral capsid protein</keyword>
<keyword id="KW-1163">Viral penetration into host nucleus</keyword>
<keyword id="KW-0946">Virion</keyword>
<keyword id="KW-1160">Virus entry into host cell</keyword>
<sequence length="262" mass="30202">MDINASRALANVYDLPDDFFPKIDDLVRDAKDALEPYWKSDSIKKHVLIATHFVDLIEDFWQTTQGMHEIAESLRAVIPPTTAPVPTGYLIQHEEAEEIPLGDLFKHQEERIVSFQPDYPITARIHAHLKAYAKINEESLDRARRLLWWHYNCLLWGEANVTNYISRLRTWLSTPEKYRGRDAPTIEAITRPIQVAQGGRKTSSGTRKPRGLEPRRRKVKTTVVYGRRRSKSRERRAPSPQRAGSPLPRSSSSHHRSPSPRK</sequence>
<protein>
    <recommendedName>
        <fullName>Capsid protein</fullName>
    </recommendedName>
    <alternativeName>
        <fullName>Core antigen</fullName>
    </alternativeName>
    <alternativeName>
        <fullName>Core protein</fullName>
    </alternativeName>
    <alternativeName>
        <fullName>HBcAg</fullName>
    </alternativeName>
</protein>